<comment type="function">
    <text evidence="1">Catalyzes the formation of the alpha-1,6-glucosidic linkages in glycogen by scission of a 1,4-alpha-linked oligosaccharide from growing alpha-1,4-glucan chains and the subsequent attachment of the oligosaccharide to the alpha-1,6 position.</text>
</comment>
<comment type="catalytic activity">
    <reaction evidence="1">
        <text>Transfers a segment of a (1-&gt;4)-alpha-D-glucan chain to a primary hydroxy group in a similar glucan chain.</text>
        <dbReference type="EC" id="2.4.1.18"/>
    </reaction>
</comment>
<comment type="pathway">
    <text evidence="1">Glycan biosynthesis; glycogen biosynthesis.</text>
</comment>
<comment type="subunit">
    <text evidence="1">Monomer.</text>
</comment>
<comment type="similarity">
    <text evidence="1">Belongs to the glycosyl hydrolase 13 family. GlgB subfamily.</text>
</comment>
<protein>
    <recommendedName>
        <fullName evidence="1">1,4-alpha-glucan branching enzyme GlgB 2</fullName>
        <ecNumber evidence="1">2.4.1.18</ecNumber>
    </recommendedName>
    <alternativeName>
        <fullName evidence="1">1,4-alpha-D-glucan:1,4-alpha-D-glucan 6-glucosyl-transferase 2</fullName>
    </alternativeName>
    <alternativeName>
        <fullName evidence="1">Alpha-(1-&gt;4)-glucan branching enzyme 2</fullName>
    </alternativeName>
    <alternativeName>
        <fullName evidence="1">Glycogen branching enzyme 2</fullName>
        <shortName evidence="1">BE 2</shortName>
    </alternativeName>
</protein>
<keyword id="KW-0119">Carbohydrate metabolism</keyword>
<keyword id="KW-0320">Glycogen biosynthesis</keyword>
<keyword id="KW-0321">Glycogen metabolism</keyword>
<keyword id="KW-0328">Glycosyltransferase</keyword>
<keyword id="KW-0808">Transferase</keyword>
<sequence>MSERQGGQEQRTEADGMTTEGISETSQTLQALANGLPADAFAVLGPKPLAEGRRQVRVLAPGAEAMGLIDPRGKLLARMQASAIDGVFEGILAADGPYRLRIVWPDRVQEVEDPYAFAATLDESLLLQIAAGDGQAVRRALGAQHVHCGDVPGVRFAVWAPHAQRVAVVGDFNGWDVRRHPMRQRIGGFWELFLPRVEAGARYKYAVTAADGRVLLKADPVARQTELPPATASVVPSAAAFAWTDAAWMANRDPGAVPAPLSIYEVHAASWRRDGHNQPLDWPTLAEQLIPYVQQLGFTHIELLPITEHPFGGSWGYQPLGLYAPTARHGSPDGFAQFVDACHRAGIGVILDWVSAHFPDDAHGLAQFDGAALYEHADPREGMHRDWNTLIYNYGRPEVTAYLLGSALEWIEHYHLDGLRVDAVASMLYRDYGRAEGEWVPNAHGGRENLEAVAFLRQLNREIATQFPGVLTIAEESTAWPGVTAAISDGGLGFTHKWNMGWMHDTLGYMQRDPAERAQHHSQLTFGLVYAFDERFVLPLSHDEVVHGTGGLLGQMPGDDWRRFANLRAYLALMWAHPGDKLLFMGAEFGQWADWNHDQSLDWHLLDGARHRGMQQLVGDLNAALRRTPALYRGSHRADGFDWSVADDARNSVLAFVRHDPAGGAPLLAVSNLTPQPHHDYHVGVPRAGLWREILNTDSAHYGGSNLGNSGRLATEPVGMHGHAQRLRLTLPPLATIYLQAEK</sequence>
<reference key="1">
    <citation type="journal article" date="2005" name="J. Bacteriol.">
        <title>Insights into genome plasticity and pathogenicity of the plant pathogenic Bacterium Xanthomonas campestris pv. vesicatoria revealed by the complete genome sequence.</title>
        <authorList>
            <person name="Thieme F."/>
            <person name="Koebnik R."/>
            <person name="Bekel T."/>
            <person name="Berger C."/>
            <person name="Boch J."/>
            <person name="Buettner D."/>
            <person name="Caldana C."/>
            <person name="Gaigalat L."/>
            <person name="Goesmann A."/>
            <person name="Kay S."/>
            <person name="Kirchner O."/>
            <person name="Lanz C."/>
            <person name="Linke B."/>
            <person name="McHardy A.C."/>
            <person name="Meyer F."/>
            <person name="Mittenhuber G."/>
            <person name="Nies D.H."/>
            <person name="Niesbach-Kloesgen U."/>
            <person name="Patschkowski T."/>
            <person name="Rueckert C."/>
            <person name="Rupp O."/>
            <person name="Schneiker S."/>
            <person name="Schuster S.C."/>
            <person name="Vorhoelter F.J."/>
            <person name="Weber E."/>
            <person name="Puehler A."/>
            <person name="Bonas U."/>
            <person name="Bartels D."/>
            <person name="Kaiser O."/>
        </authorList>
    </citation>
    <scope>NUCLEOTIDE SEQUENCE [LARGE SCALE GENOMIC DNA]</scope>
    <source>
        <strain>85-10</strain>
    </source>
</reference>
<feature type="chain" id="PRO_0000260717" description="1,4-alpha-glucan branching enzyme GlgB 2">
    <location>
        <begin position="1"/>
        <end position="743"/>
    </location>
</feature>
<feature type="region of interest" description="Disordered" evidence="2">
    <location>
        <begin position="1"/>
        <end position="23"/>
    </location>
</feature>
<feature type="active site" description="Nucleophile" evidence="1">
    <location>
        <position position="422"/>
    </location>
</feature>
<feature type="active site" description="Proton donor" evidence="1">
    <location>
        <position position="475"/>
    </location>
</feature>
<name>GLGB2_XANE5</name>
<proteinExistence type="inferred from homology"/>
<gene>
    <name evidence="1" type="primary">glgB2</name>
    <name type="ordered locus">XCV0452</name>
</gene>
<dbReference type="EC" id="2.4.1.18" evidence="1"/>
<dbReference type="EMBL" id="AM039952">
    <property type="protein sequence ID" value="CAJ22083.1"/>
    <property type="molecule type" value="Genomic_DNA"/>
</dbReference>
<dbReference type="RefSeq" id="WP_011346122.1">
    <property type="nucleotide sequence ID" value="NZ_CP017190.1"/>
</dbReference>
<dbReference type="SMR" id="Q3BYI0"/>
<dbReference type="STRING" id="456327.BJD11_20610"/>
<dbReference type="CAZy" id="CBM48">
    <property type="family name" value="Carbohydrate-Binding Module Family 48"/>
</dbReference>
<dbReference type="CAZy" id="GH13">
    <property type="family name" value="Glycoside Hydrolase Family 13"/>
</dbReference>
<dbReference type="KEGG" id="xcv:XCV0452"/>
<dbReference type="eggNOG" id="COG0296">
    <property type="taxonomic scope" value="Bacteria"/>
</dbReference>
<dbReference type="HOGENOM" id="CLU_004245_3_2_6"/>
<dbReference type="UniPathway" id="UPA00164"/>
<dbReference type="Proteomes" id="UP000007069">
    <property type="component" value="Chromosome"/>
</dbReference>
<dbReference type="GO" id="GO:0005829">
    <property type="term" value="C:cytosol"/>
    <property type="evidence" value="ECO:0007669"/>
    <property type="project" value="TreeGrafter"/>
</dbReference>
<dbReference type="GO" id="GO:0003844">
    <property type="term" value="F:1,4-alpha-glucan branching enzyme activity"/>
    <property type="evidence" value="ECO:0007669"/>
    <property type="project" value="UniProtKB-UniRule"/>
</dbReference>
<dbReference type="GO" id="GO:0043169">
    <property type="term" value="F:cation binding"/>
    <property type="evidence" value="ECO:0007669"/>
    <property type="project" value="InterPro"/>
</dbReference>
<dbReference type="GO" id="GO:0004553">
    <property type="term" value="F:hydrolase activity, hydrolyzing O-glycosyl compounds"/>
    <property type="evidence" value="ECO:0007669"/>
    <property type="project" value="InterPro"/>
</dbReference>
<dbReference type="GO" id="GO:0005978">
    <property type="term" value="P:glycogen biosynthetic process"/>
    <property type="evidence" value="ECO:0007669"/>
    <property type="project" value="UniProtKB-UniRule"/>
</dbReference>
<dbReference type="CDD" id="cd11322">
    <property type="entry name" value="AmyAc_Glg_BE"/>
    <property type="match status" value="1"/>
</dbReference>
<dbReference type="CDD" id="cd02855">
    <property type="entry name" value="E_set_GBE_prok_N"/>
    <property type="match status" value="1"/>
</dbReference>
<dbReference type="FunFam" id="2.60.40.1180:FF:000002">
    <property type="entry name" value="1,4-alpha-glucan branching enzyme GlgB"/>
    <property type="match status" value="1"/>
</dbReference>
<dbReference type="FunFam" id="3.20.20.80:FF:000003">
    <property type="entry name" value="1,4-alpha-glucan branching enzyme GlgB"/>
    <property type="match status" value="1"/>
</dbReference>
<dbReference type="Gene3D" id="3.20.20.80">
    <property type="entry name" value="Glycosidases"/>
    <property type="match status" value="1"/>
</dbReference>
<dbReference type="Gene3D" id="2.60.40.1180">
    <property type="entry name" value="Golgi alpha-mannosidase II"/>
    <property type="match status" value="1"/>
</dbReference>
<dbReference type="Gene3D" id="2.60.40.10">
    <property type="entry name" value="Immunoglobulins"/>
    <property type="match status" value="2"/>
</dbReference>
<dbReference type="HAMAP" id="MF_00685">
    <property type="entry name" value="GlgB"/>
    <property type="match status" value="1"/>
</dbReference>
<dbReference type="InterPro" id="IPR006048">
    <property type="entry name" value="A-amylase/branching_C"/>
</dbReference>
<dbReference type="InterPro" id="IPR037439">
    <property type="entry name" value="Branching_enzy"/>
</dbReference>
<dbReference type="InterPro" id="IPR006407">
    <property type="entry name" value="GlgB"/>
</dbReference>
<dbReference type="InterPro" id="IPR054169">
    <property type="entry name" value="GlgB_N"/>
</dbReference>
<dbReference type="InterPro" id="IPR044143">
    <property type="entry name" value="GlgB_N_E_set_prok"/>
</dbReference>
<dbReference type="InterPro" id="IPR006047">
    <property type="entry name" value="Glyco_hydro_13_cat_dom"/>
</dbReference>
<dbReference type="InterPro" id="IPR004193">
    <property type="entry name" value="Glyco_hydro_13_N"/>
</dbReference>
<dbReference type="InterPro" id="IPR013780">
    <property type="entry name" value="Glyco_hydro_b"/>
</dbReference>
<dbReference type="InterPro" id="IPR017853">
    <property type="entry name" value="Glycoside_hydrolase_SF"/>
</dbReference>
<dbReference type="InterPro" id="IPR013783">
    <property type="entry name" value="Ig-like_fold"/>
</dbReference>
<dbReference type="InterPro" id="IPR014756">
    <property type="entry name" value="Ig_E-set"/>
</dbReference>
<dbReference type="NCBIfam" id="TIGR01515">
    <property type="entry name" value="branching_enzym"/>
    <property type="match status" value="1"/>
</dbReference>
<dbReference type="NCBIfam" id="NF003811">
    <property type="entry name" value="PRK05402.1"/>
    <property type="match status" value="1"/>
</dbReference>
<dbReference type="NCBIfam" id="NF008967">
    <property type="entry name" value="PRK12313.1"/>
    <property type="match status" value="1"/>
</dbReference>
<dbReference type="NCBIfam" id="NF009221">
    <property type="entry name" value="PRK12568.1"/>
    <property type="match status" value="1"/>
</dbReference>
<dbReference type="PANTHER" id="PTHR43651">
    <property type="entry name" value="1,4-ALPHA-GLUCAN-BRANCHING ENZYME"/>
    <property type="match status" value="1"/>
</dbReference>
<dbReference type="PANTHER" id="PTHR43651:SF3">
    <property type="entry name" value="1,4-ALPHA-GLUCAN-BRANCHING ENZYME"/>
    <property type="match status" value="1"/>
</dbReference>
<dbReference type="Pfam" id="PF00128">
    <property type="entry name" value="Alpha-amylase"/>
    <property type="match status" value="1"/>
</dbReference>
<dbReference type="Pfam" id="PF02806">
    <property type="entry name" value="Alpha-amylase_C"/>
    <property type="match status" value="1"/>
</dbReference>
<dbReference type="Pfam" id="PF02922">
    <property type="entry name" value="CBM_48"/>
    <property type="match status" value="1"/>
</dbReference>
<dbReference type="Pfam" id="PF22019">
    <property type="entry name" value="GlgB_N"/>
    <property type="match status" value="1"/>
</dbReference>
<dbReference type="PIRSF" id="PIRSF000463">
    <property type="entry name" value="GlgB"/>
    <property type="match status" value="1"/>
</dbReference>
<dbReference type="SMART" id="SM00642">
    <property type="entry name" value="Aamy"/>
    <property type="match status" value="1"/>
</dbReference>
<dbReference type="SUPFAM" id="SSF51445">
    <property type="entry name" value="(Trans)glycosidases"/>
    <property type="match status" value="1"/>
</dbReference>
<dbReference type="SUPFAM" id="SSF81296">
    <property type="entry name" value="E set domains"/>
    <property type="match status" value="1"/>
</dbReference>
<dbReference type="SUPFAM" id="SSF51011">
    <property type="entry name" value="Glycosyl hydrolase domain"/>
    <property type="match status" value="1"/>
</dbReference>
<organism>
    <name type="scientific">Xanthomonas euvesicatoria pv. vesicatoria (strain 85-10)</name>
    <name type="common">Xanthomonas campestris pv. vesicatoria</name>
    <dbReference type="NCBI Taxonomy" id="316273"/>
    <lineage>
        <taxon>Bacteria</taxon>
        <taxon>Pseudomonadati</taxon>
        <taxon>Pseudomonadota</taxon>
        <taxon>Gammaproteobacteria</taxon>
        <taxon>Lysobacterales</taxon>
        <taxon>Lysobacteraceae</taxon>
        <taxon>Xanthomonas</taxon>
    </lineage>
</organism>
<accession>Q3BYI0</accession>
<evidence type="ECO:0000255" key="1">
    <source>
        <dbReference type="HAMAP-Rule" id="MF_00685"/>
    </source>
</evidence>
<evidence type="ECO:0000256" key="2">
    <source>
        <dbReference type="SAM" id="MobiDB-lite"/>
    </source>
</evidence>